<gene>
    <name evidence="1" type="primary">pnp</name>
    <name type="ordered locus">TTE1387</name>
</gene>
<protein>
    <recommendedName>
        <fullName evidence="1">Polyribonucleotide nucleotidyltransferase</fullName>
        <ecNumber evidence="1">2.7.7.8</ecNumber>
    </recommendedName>
    <alternativeName>
        <fullName evidence="1">Polynucleotide phosphorylase</fullName>
        <shortName evidence="1">PNPase</shortName>
    </alternativeName>
</protein>
<accession>Q8RA43</accession>
<evidence type="ECO:0000255" key="1">
    <source>
        <dbReference type="HAMAP-Rule" id="MF_01595"/>
    </source>
</evidence>
<evidence type="ECO:0000256" key="2">
    <source>
        <dbReference type="SAM" id="MobiDB-lite"/>
    </source>
</evidence>
<name>PNP_CALS4</name>
<sequence>MEERTFEMELAGRKLVVQTGKVAQQANGAAWVKYGDTVVLVTACASKEPREGIDFFPLTVEYEERLYSIGKIPGGFIKREGKPSEKAILSARLIDRPIRPLFPEGYRNDVQVIATVLSVDPDAQPEIVAMIGSSVALSISDIPFNGPTGSVAVGLVDGKFVINPTYEQREKSLMHLVVSGTKDAIVMVEAGAKEVPEETILDAIVYAHQYIKQIVEFIEGIVKEVGVPKAEVVLHEIDKELEEKVRAYATEKIYNALRTPEKKERNDNLDKVEQEVLEHFKDEYPDNLADIDEVLYKIMKEQMRKMIKEEKIRVDGRGLDDIRPIWCEVGVLPRTHGSAIFTRGQTQVLTVATLGAIGDIQILEGIGDEEFKRYMHHYNFPPYSVGEVRPLRGPGRREIGHGALAERALEPVIPSEEEFPYTIRLVSEVLSSNGSTSQASVCGSTLALMDAGVPIKAPVAGIAMGLIKEEDEVLILTDIQGIEDFLGDMDFKVAGTEKGVTAIQMDIKIPGIDRDILQMALEKARKARLYVLQKMLEVIKEPRKELSKYAPRVVRMVVNPEKIRDIIGPAGKTITKIISETGVKIDIEEDGRLYITAPNLEAGERAKQMIEAITKDIEVGGIYLGKVLRIAPFGAFVEIAPGKEGLVHISNLSKKRVRRVEDVVKVGDNILVKVTEIDKLGRIVLSRKDAMPDEEESDNRKSDNRKK</sequence>
<comment type="function">
    <text evidence="1">Involved in mRNA degradation. Catalyzes the phosphorolysis of single-stranded polyribonucleotides processively in the 3'- to 5'-direction.</text>
</comment>
<comment type="catalytic activity">
    <reaction evidence="1">
        <text>RNA(n+1) + phosphate = RNA(n) + a ribonucleoside 5'-diphosphate</text>
        <dbReference type="Rhea" id="RHEA:22096"/>
        <dbReference type="Rhea" id="RHEA-COMP:14527"/>
        <dbReference type="Rhea" id="RHEA-COMP:17342"/>
        <dbReference type="ChEBI" id="CHEBI:43474"/>
        <dbReference type="ChEBI" id="CHEBI:57930"/>
        <dbReference type="ChEBI" id="CHEBI:140395"/>
        <dbReference type="EC" id="2.7.7.8"/>
    </reaction>
</comment>
<comment type="cofactor">
    <cofactor evidence="1">
        <name>Mg(2+)</name>
        <dbReference type="ChEBI" id="CHEBI:18420"/>
    </cofactor>
</comment>
<comment type="subcellular location">
    <subcellularLocation>
        <location evidence="1">Cytoplasm</location>
    </subcellularLocation>
</comment>
<comment type="similarity">
    <text evidence="1">Belongs to the polyribonucleotide nucleotidyltransferase family.</text>
</comment>
<organism>
    <name type="scientific">Caldanaerobacter subterraneus subsp. tengcongensis (strain DSM 15242 / JCM 11007 / NBRC 100824 / MB4)</name>
    <name type="common">Thermoanaerobacter tengcongensis</name>
    <dbReference type="NCBI Taxonomy" id="273068"/>
    <lineage>
        <taxon>Bacteria</taxon>
        <taxon>Bacillati</taxon>
        <taxon>Bacillota</taxon>
        <taxon>Clostridia</taxon>
        <taxon>Thermoanaerobacterales</taxon>
        <taxon>Thermoanaerobacteraceae</taxon>
        <taxon>Caldanaerobacter</taxon>
    </lineage>
</organism>
<reference key="1">
    <citation type="journal article" date="2002" name="Genome Res.">
        <title>A complete sequence of the T. tengcongensis genome.</title>
        <authorList>
            <person name="Bao Q."/>
            <person name="Tian Y."/>
            <person name="Li W."/>
            <person name="Xu Z."/>
            <person name="Xuan Z."/>
            <person name="Hu S."/>
            <person name="Dong W."/>
            <person name="Yang J."/>
            <person name="Chen Y."/>
            <person name="Xue Y."/>
            <person name="Xu Y."/>
            <person name="Lai X."/>
            <person name="Huang L."/>
            <person name="Dong X."/>
            <person name="Ma Y."/>
            <person name="Ling L."/>
            <person name="Tan H."/>
            <person name="Chen R."/>
            <person name="Wang J."/>
            <person name="Yu J."/>
            <person name="Yang H."/>
        </authorList>
    </citation>
    <scope>NUCLEOTIDE SEQUENCE [LARGE SCALE GENOMIC DNA]</scope>
    <source>
        <strain>DSM 15242 / JCM 11007 / NBRC 100824 / MB4</strain>
    </source>
</reference>
<proteinExistence type="inferred from homology"/>
<dbReference type="EC" id="2.7.7.8" evidence="1"/>
<dbReference type="EMBL" id="AE008691">
    <property type="protein sequence ID" value="AAM24609.1"/>
    <property type="molecule type" value="Genomic_DNA"/>
</dbReference>
<dbReference type="RefSeq" id="WP_011025675.1">
    <property type="nucleotide sequence ID" value="NC_003869.1"/>
</dbReference>
<dbReference type="SMR" id="Q8RA43"/>
<dbReference type="STRING" id="273068.TTE1387"/>
<dbReference type="KEGG" id="tte:TTE1387"/>
<dbReference type="eggNOG" id="COG1185">
    <property type="taxonomic scope" value="Bacteria"/>
</dbReference>
<dbReference type="HOGENOM" id="CLU_004217_2_2_9"/>
<dbReference type="OrthoDB" id="9804305at2"/>
<dbReference type="Proteomes" id="UP000000555">
    <property type="component" value="Chromosome"/>
</dbReference>
<dbReference type="GO" id="GO:0005829">
    <property type="term" value="C:cytosol"/>
    <property type="evidence" value="ECO:0007669"/>
    <property type="project" value="TreeGrafter"/>
</dbReference>
<dbReference type="GO" id="GO:0000175">
    <property type="term" value="F:3'-5'-RNA exonuclease activity"/>
    <property type="evidence" value="ECO:0007669"/>
    <property type="project" value="TreeGrafter"/>
</dbReference>
<dbReference type="GO" id="GO:0000287">
    <property type="term" value="F:magnesium ion binding"/>
    <property type="evidence" value="ECO:0007669"/>
    <property type="project" value="UniProtKB-UniRule"/>
</dbReference>
<dbReference type="GO" id="GO:0004654">
    <property type="term" value="F:polyribonucleotide nucleotidyltransferase activity"/>
    <property type="evidence" value="ECO:0007669"/>
    <property type="project" value="UniProtKB-UniRule"/>
</dbReference>
<dbReference type="GO" id="GO:0003723">
    <property type="term" value="F:RNA binding"/>
    <property type="evidence" value="ECO:0007669"/>
    <property type="project" value="UniProtKB-UniRule"/>
</dbReference>
<dbReference type="GO" id="GO:0006402">
    <property type="term" value="P:mRNA catabolic process"/>
    <property type="evidence" value="ECO:0007669"/>
    <property type="project" value="UniProtKB-UniRule"/>
</dbReference>
<dbReference type="GO" id="GO:0006396">
    <property type="term" value="P:RNA processing"/>
    <property type="evidence" value="ECO:0007669"/>
    <property type="project" value="InterPro"/>
</dbReference>
<dbReference type="CDD" id="cd02393">
    <property type="entry name" value="KH-I_PNPase"/>
    <property type="match status" value="1"/>
</dbReference>
<dbReference type="CDD" id="cd11363">
    <property type="entry name" value="RNase_PH_PNPase_1"/>
    <property type="match status" value="1"/>
</dbReference>
<dbReference type="CDD" id="cd11364">
    <property type="entry name" value="RNase_PH_PNPase_2"/>
    <property type="match status" value="1"/>
</dbReference>
<dbReference type="CDD" id="cd04472">
    <property type="entry name" value="S1_PNPase"/>
    <property type="match status" value="1"/>
</dbReference>
<dbReference type="FunFam" id="2.40.50.140:FF:000023">
    <property type="entry name" value="Polyribonucleotide nucleotidyltransferase"/>
    <property type="match status" value="1"/>
</dbReference>
<dbReference type="FunFam" id="3.30.1370.10:FF:000001">
    <property type="entry name" value="Polyribonucleotide nucleotidyltransferase"/>
    <property type="match status" value="1"/>
</dbReference>
<dbReference type="FunFam" id="3.30.230.70:FF:000001">
    <property type="entry name" value="Polyribonucleotide nucleotidyltransferase"/>
    <property type="match status" value="1"/>
</dbReference>
<dbReference type="FunFam" id="3.30.230.70:FF:000002">
    <property type="entry name" value="Polyribonucleotide nucleotidyltransferase"/>
    <property type="match status" value="1"/>
</dbReference>
<dbReference type="Gene3D" id="3.30.230.70">
    <property type="entry name" value="GHMP Kinase, N-terminal domain"/>
    <property type="match status" value="2"/>
</dbReference>
<dbReference type="Gene3D" id="3.30.1370.10">
    <property type="entry name" value="K Homology domain, type 1"/>
    <property type="match status" value="1"/>
</dbReference>
<dbReference type="Gene3D" id="2.40.50.140">
    <property type="entry name" value="Nucleic acid-binding proteins"/>
    <property type="match status" value="1"/>
</dbReference>
<dbReference type="HAMAP" id="MF_01595">
    <property type="entry name" value="PNPase"/>
    <property type="match status" value="1"/>
</dbReference>
<dbReference type="InterPro" id="IPR001247">
    <property type="entry name" value="ExoRNase_PH_dom1"/>
</dbReference>
<dbReference type="InterPro" id="IPR015847">
    <property type="entry name" value="ExoRNase_PH_dom2"/>
</dbReference>
<dbReference type="InterPro" id="IPR036345">
    <property type="entry name" value="ExoRNase_PH_dom2_sf"/>
</dbReference>
<dbReference type="InterPro" id="IPR004087">
    <property type="entry name" value="KH_dom"/>
</dbReference>
<dbReference type="InterPro" id="IPR004088">
    <property type="entry name" value="KH_dom_type_1"/>
</dbReference>
<dbReference type="InterPro" id="IPR036612">
    <property type="entry name" value="KH_dom_type_1_sf"/>
</dbReference>
<dbReference type="InterPro" id="IPR012340">
    <property type="entry name" value="NA-bd_OB-fold"/>
</dbReference>
<dbReference type="InterPro" id="IPR012162">
    <property type="entry name" value="PNPase"/>
</dbReference>
<dbReference type="InterPro" id="IPR027408">
    <property type="entry name" value="PNPase/RNase_PH_dom_sf"/>
</dbReference>
<dbReference type="InterPro" id="IPR015848">
    <property type="entry name" value="PNPase_PH_RNA-bd_bac/org-type"/>
</dbReference>
<dbReference type="InterPro" id="IPR036456">
    <property type="entry name" value="PNPase_PH_RNA-bd_sf"/>
</dbReference>
<dbReference type="InterPro" id="IPR020568">
    <property type="entry name" value="Ribosomal_Su5_D2-typ_SF"/>
</dbReference>
<dbReference type="InterPro" id="IPR003029">
    <property type="entry name" value="S1_domain"/>
</dbReference>
<dbReference type="NCBIfam" id="TIGR03591">
    <property type="entry name" value="polynuc_phos"/>
    <property type="match status" value="1"/>
</dbReference>
<dbReference type="NCBIfam" id="NF008805">
    <property type="entry name" value="PRK11824.1"/>
    <property type="match status" value="1"/>
</dbReference>
<dbReference type="PANTHER" id="PTHR11252">
    <property type="entry name" value="POLYRIBONUCLEOTIDE NUCLEOTIDYLTRANSFERASE"/>
    <property type="match status" value="1"/>
</dbReference>
<dbReference type="PANTHER" id="PTHR11252:SF0">
    <property type="entry name" value="POLYRIBONUCLEOTIDE NUCLEOTIDYLTRANSFERASE 1, MITOCHONDRIAL"/>
    <property type="match status" value="1"/>
</dbReference>
<dbReference type="Pfam" id="PF00013">
    <property type="entry name" value="KH_1"/>
    <property type="match status" value="1"/>
</dbReference>
<dbReference type="Pfam" id="PF03726">
    <property type="entry name" value="PNPase"/>
    <property type="match status" value="1"/>
</dbReference>
<dbReference type="Pfam" id="PF01138">
    <property type="entry name" value="RNase_PH"/>
    <property type="match status" value="2"/>
</dbReference>
<dbReference type="Pfam" id="PF03725">
    <property type="entry name" value="RNase_PH_C"/>
    <property type="match status" value="2"/>
</dbReference>
<dbReference type="Pfam" id="PF00575">
    <property type="entry name" value="S1"/>
    <property type="match status" value="1"/>
</dbReference>
<dbReference type="PIRSF" id="PIRSF005499">
    <property type="entry name" value="PNPase"/>
    <property type="match status" value="1"/>
</dbReference>
<dbReference type="SMART" id="SM00322">
    <property type="entry name" value="KH"/>
    <property type="match status" value="1"/>
</dbReference>
<dbReference type="SMART" id="SM00316">
    <property type="entry name" value="S1"/>
    <property type="match status" value="1"/>
</dbReference>
<dbReference type="SUPFAM" id="SSF54791">
    <property type="entry name" value="Eukaryotic type KH-domain (KH-domain type I)"/>
    <property type="match status" value="1"/>
</dbReference>
<dbReference type="SUPFAM" id="SSF50249">
    <property type="entry name" value="Nucleic acid-binding proteins"/>
    <property type="match status" value="1"/>
</dbReference>
<dbReference type="SUPFAM" id="SSF46915">
    <property type="entry name" value="Polynucleotide phosphorylase/guanosine pentaphosphate synthase (PNPase/GPSI), domain 3"/>
    <property type="match status" value="1"/>
</dbReference>
<dbReference type="SUPFAM" id="SSF55666">
    <property type="entry name" value="Ribonuclease PH domain 2-like"/>
    <property type="match status" value="2"/>
</dbReference>
<dbReference type="SUPFAM" id="SSF54211">
    <property type="entry name" value="Ribosomal protein S5 domain 2-like"/>
    <property type="match status" value="2"/>
</dbReference>
<dbReference type="PROSITE" id="PS50084">
    <property type="entry name" value="KH_TYPE_1"/>
    <property type="match status" value="1"/>
</dbReference>
<dbReference type="PROSITE" id="PS50126">
    <property type="entry name" value="S1"/>
    <property type="match status" value="1"/>
</dbReference>
<feature type="chain" id="PRO_0000329909" description="Polyribonucleotide nucleotidyltransferase">
    <location>
        <begin position="1"/>
        <end position="707"/>
    </location>
</feature>
<feature type="domain" description="KH" evidence="1">
    <location>
        <begin position="551"/>
        <end position="610"/>
    </location>
</feature>
<feature type="domain" description="S1 motif" evidence="1">
    <location>
        <begin position="620"/>
        <end position="688"/>
    </location>
</feature>
<feature type="region of interest" description="Disordered" evidence="2">
    <location>
        <begin position="688"/>
        <end position="707"/>
    </location>
</feature>
<feature type="compositionally biased region" description="Basic and acidic residues" evidence="2">
    <location>
        <begin position="698"/>
        <end position="707"/>
    </location>
</feature>
<feature type="binding site" evidence="1">
    <location>
        <position position="484"/>
    </location>
    <ligand>
        <name>Mg(2+)</name>
        <dbReference type="ChEBI" id="CHEBI:18420"/>
    </ligand>
</feature>
<feature type="binding site" evidence="1">
    <location>
        <position position="490"/>
    </location>
    <ligand>
        <name>Mg(2+)</name>
        <dbReference type="ChEBI" id="CHEBI:18420"/>
    </ligand>
</feature>
<keyword id="KW-0963">Cytoplasm</keyword>
<keyword id="KW-0460">Magnesium</keyword>
<keyword id="KW-0479">Metal-binding</keyword>
<keyword id="KW-0548">Nucleotidyltransferase</keyword>
<keyword id="KW-1185">Reference proteome</keyword>
<keyword id="KW-0694">RNA-binding</keyword>
<keyword id="KW-0808">Transferase</keyword>